<sequence>MTQWEVVIGLETHAQLSTVSKIFSGASTQFGAQPNTQACPVDLALPGVLPVLNRGAVERAIRFGLAIGATVAPRSVFARKNYFYPDLPKGYQISQYEIPVVQGGQITIQVPANEKAGKQAYSKTVNLTRAHLEEDAGKSLHEDFAGMTGIDLNRAGTPLLEIVTEPEMRSAAEAVAYAKALHGLVMWLGICDGNMQEGSFRCDANVSVRPVGQEKFGTRAEIKNLNSFRFLEDAINYEVRRQIELIEDGGEVVQETRLYDPDKRETRSMRSKEDAHDYRYFPDPDLMPLVIGADWIARVKGEMPELPAVMQQRFIEQYGVSAYDAGVLTSTKAMAEYFEALVAKAGAANAKLAANWLMGDVSSQLNRDGIDIDACPVSAAQLALVLQRIADGTISNKIAKEIFVTIWDEKAADEGAADRIIEAKGLKQISDTGALEAIIDEVLAANAKSVEEFRAGKDKAFNALVGQAMKATKGKANPQQVNELLKKKLG</sequence>
<reference key="1">
    <citation type="journal article" date="2010" name="Genome Biol. Evol.">
        <title>Continuing evolution of Burkholderia mallei through genome reduction and large-scale rearrangements.</title>
        <authorList>
            <person name="Losada L."/>
            <person name="Ronning C.M."/>
            <person name="DeShazer D."/>
            <person name="Woods D."/>
            <person name="Fedorova N."/>
            <person name="Kim H.S."/>
            <person name="Shabalina S.A."/>
            <person name="Pearson T.R."/>
            <person name="Brinkac L."/>
            <person name="Tan P."/>
            <person name="Nandi T."/>
            <person name="Crabtree J."/>
            <person name="Badger J."/>
            <person name="Beckstrom-Sternberg S."/>
            <person name="Saqib M."/>
            <person name="Schutzer S.E."/>
            <person name="Keim P."/>
            <person name="Nierman W.C."/>
        </authorList>
    </citation>
    <scope>NUCLEOTIDE SEQUENCE [LARGE SCALE GENOMIC DNA]</scope>
    <source>
        <strain>NCTC 10247</strain>
    </source>
</reference>
<name>GATB_BURM7</name>
<protein>
    <recommendedName>
        <fullName evidence="1">Aspartyl/glutamyl-tRNA(Asn/Gln) amidotransferase subunit B</fullName>
        <shortName evidence="1">Asp/Glu-ADT subunit B</shortName>
        <ecNumber evidence="1">6.3.5.-</ecNumber>
    </recommendedName>
</protein>
<proteinExistence type="inferred from homology"/>
<gene>
    <name evidence="1" type="primary">gatB</name>
    <name type="ordered locus">BMA10247_2377</name>
</gene>
<organism>
    <name type="scientific">Burkholderia mallei (strain NCTC 10247)</name>
    <dbReference type="NCBI Taxonomy" id="320389"/>
    <lineage>
        <taxon>Bacteria</taxon>
        <taxon>Pseudomonadati</taxon>
        <taxon>Pseudomonadota</taxon>
        <taxon>Betaproteobacteria</taxon>
        <taxon>Burkholderiales</taxon>
        <taxon>Burkholderiaceae</taxon>
        <taxon>Burkholderia</taxon>
        <taxon>pseudomallei group</taxon>
    </lineage>
</organism>
<accession>A3MNR7</accession>
<keyword id="KW-0067">ATP-binding</keyword>
<keyword id="KW-0436">Ligase</keyword>
<keyword id="KW-0547">Nucleotide-binding</keyword>
<keyword id="KW-0648">Protein biosynthesis</keyword>
<dbReference type="EC" id="6.3.5.-" evidence="1"/>
<dbReference type="EMBL" id="CP000548">
    <property type="protein sequence ID" value="ABO07218.1"/>
    <property type="molecule type" value="Genomic_DNA"/>
</dbReference>
<dbReference type="RefSeq" id="WP_004190092.1">
    <property type="nucleotide sequence ID" value="NZ_CP007802.1"/>
</dbReference>
<dbReference type="SMR" id="A3MNR7"/>
<dbReference type="GeneID" id="92977943"/>
<dbReference type="KEGG" id="bmaz:BM44_911"/>
<dbReference type="KEGG" id="bmn:BMA10247_2377"/>
<dbReference type="PATRIC" id="fig|320389.8.peg.1014"/>
<dbReference type="GO" id="GO:0050566">
    <property type="term" value="F:asparaginyl-tRNA synthase (glutamine-hydrolyzing) activity"/>
    <property type="evidence" value="ECO:0007669"/>
    <property type="project" value="RHEA"/>
</dbReference>
<dbReference type="GO" id="GO:0005524">
    <property type="term" value="F:ATP binding"/>
    <property type="evidence" value="ECO:0007669"/>
    <property type="project" value="UniProtKB-KW"/>
</dbReference>
<dbReference type="GO" id="GO:0050567">
    <property type="term" value="F:glutaminyl-tRNA synthase (glutamine-hydrolyzing) activity"/>
    <property type="evidence" value="ECO:0007669"/>
    <property type="project" value="UniProtKB-UniRule"/>
</dbReference>
<dbReference type="GO" id="GO:0070681">
    <property type="term" value="P:glutaminyl-tRNAGln biosynthesis via transamidation"/>
    <property type="evidence" value="ECO:0007669"/>
    <property type="project" value="TreeGrafter"/>
</dbReference>
<dbReference type="GO" id="GO:0006412">
    <property type="term" value="P:translation"/>
    <property type="evidence" value="ECO:0007669"/>
    <property type="project" value="UniProtKB-UniRule"/>
</dbReference>
<dbReference type="FunFam" id="1.10.10.410:FF:000001">
    <property type="entry name" value="Aspartyl/glutamyl-tRNA(Asn/Gln) amidotransferase subunit B"/>
    <property type="match status" value="1"/>
</dbReference>
<dbReference type="FunFam" id="1.10.150.380:FF:000001">
    <property type="entry name" value="Aspartyl/glutamyl-tRNA(Asn/Gln) amidotransferase subunit B"/>
    <property type="match status" value="1"/>
</dbReference>
<dbReference type="Gene3D" id="1.10.10.410">
    <property type="match status" value="1"/>
</dbReference>
<dbReference type="Gene3D" id="1.10.150.380">
    <property type="entry name" value="GatB domain, N-terminal subdomain"/>
    <property type="match status" value="1"/>
</dbReference>
<dbReference type="HAMAP" id="MF_00121">
    <property type="entry name" value="GatB"/>
    <property type="match status" value="1"/>
</dbReference>
<dbReference type="InterPro" id="IPR017959">
    <property type="entry name" value="Asn/Gln-tRNA_amidoTrfase_suB/E"/>
</dbReference>
<dbReference type="InterPro" id="IPR006075">
    <property type="entry name" value="Asn/Gln-tRNA_Trfase_suB/E_cat"/>
</dbReference>
<dbReference type="InterPro" id="IPR018027">
    <property type="entry name" value="Asn/Gln_amidotransferase"/>
</dbReference>
<dbReference type="InterPro" id="IPR003789">
    <property type="entry name" value="Asn/Gln_tRNA_amidoTrase-B-like"/>
</dbReference>
<dbReference type="InterPro" id="IPR004413">
    <property type="entry name" value="GatB"/>
</dbReference>
<dbReference type="InterPro" id="IPR042114">
    <property type="entry name" value="GatB_C_1"/>
</dbReference>
<dbReference type="InterPro" id="IPR023168">
    <property type="entry name" value="GatB_Yqey_C_2"/>
</dbReference>
<dbReference type="InterPro" id="IPR017958">
    <property type="entry name" value="Gln-tRNA_amidoTrfase_suB_CS"/>
</dbReference>
<dbReference type="InterPro" id="IPR014746">
    <property type="entry name" value="Gln_synth/guanido_kin_cat_dom"/>
</dbReference>
<dbReference type="NCBIfam" id="TIGR00133">
    <property type="entry name" value="gatB"/>
    <property type="match status" value="1"/>
</dbReference>
<dbReference type="NCBIfam" id="NF004012">
    <property type="entry name" value="PRK05477.1-2"/>
    <property type="match status" value="1"/>
</dbReference>
<dbReference type="NCBIfam" id="NF004014">
    <property type="entry name" value="PRK05477.1-4"/>
    <property type="match status" value="1"/>
</dbReference>
<dbReference type="NCBIfam" id="NF004015">
    <property type="entry name" value="PRK05477.1-5"/>
    <property type="match status" value="1"/>
</dbReference>
<dbReference type="PANTHER" id="PTHR11659">
    <property type="entry name" value="GLUTAMYL-TRNA GLN AMIDOTRANSFERASE SUBUNIT B MITOCHONDRIAL AND PROKARYOTIC PET112-RELATED"/>
    <property type="match status" value="1"/>
</dbReference>
<dbReference type="PANTHER" id="PTHR11659:SF0">
    <property type="entry name" value="GLUTAMYL-TRNA(GLN) AMIDOTRANSFERASE SUBUNIT B, MITOCHONDRIAL"/>
    <property type="match status" value="1"/>
</dbReference>
<dbReference type="Pfam" id="PF02934">
    <property type="entry name" value="GatB_N"/>
    <property type="match status" value="1"/>
</dbReference>
<dbReference type="Pfam" id="PF02637">
    <property type="entry name" value="GatB_Yqey"/>
    <property type="match status" value="1"/>
</dbReference>
<dbReference type="SMART" id="SM00845">
    <property type="entry name" value="GatB_Yqey"/>
    <property type="match status" value="1"/>
</dbReference>
<dbReference type="SUPFAM" id="SSF89095">
    <property type="entry name" value="GatB/YqeY motif"/>
    <property type="match status" value="1"/>
</dbReference>
<dbReference type="SUPFAM" id="SSF55931">
    <property type="entry name" value="Glutamine synthetase/guanido kinase"/>
    <property type="match status" value="1"/>
</dbReference>
<dbReference type="PROSITE" id="PS01234">
    <property type="entry name" value="GATB"/>
    <property type="match status" value="1"/>
</dbReference>
<evidence type="ECO:0000255" key="1">
    <source>
        <dbReference type="HAMAP-Rule" id="MF_00121"/>
    </source>
</evidence>
<feature type="chain" id="PRO_1000015943" description="Aspartyl/glutamyl-tRNA(Asn/Gln) amidotransferase subunit B">
    <location>
        <begin position="1"/>
        <end position="490"/>
    </location>
</feature>
<comment type="function">
    <text evidence="1">Allows the formation of correctly charged Asn-tRNA(Asn) or Gln-tRNA(Gln) through the transamidation of misacylated Asp-tRNA(Asn) or Glu-tRNA(Gln) in organisms which lack either or both of asparaginyl-tRNA or glutaminyl-tRNA synthetases. The reaction takes place in the presence of glutamine and ATP through an activated phospho-Asp-tRNA(Asn) or phospho-Glu-tRNA(Gln).</text>
</comment>
<comment type="catalytic activity">
    <reaction evidence="1">
        <text>L-glutamyl-tRNA(Gln) + L-glutamine + ATP + H2O = L-glutaminyl-tRNA(Gln) + L-glutamate + ADP + phosphate + H(+)</text>
        <dbReference type="Rhea" id="RHEA:17521"/>
        <dbReference type="Rhea" id="RHEA-COMP:9681"/>
        <dbReference type="Rhea" id="RHEA-COMP:9684"/>
        <dbReference type="ChEBI" id="CHEBI:15377"/>
        <dbReference type="ChEBI" id="CHEBI:15378"/>
        <dbReference type="ChEBI" id="CHEBI:29985"/>
        <dbReference type="ChEBI" id="CHEBI:30616"/>
        <dbReference type="ChEBI" id="CHEBI:43474"/>
        <dbReference type="ChEBI" id="CHEBI:58359"/>
        <dbReference type="ChEBI" id="CHEBI:78520"/>
        <dbReference type="ChEBI" id="CHEBI:78521"/>
        <dbReference type="ChEBI" id="CHEBI:456216"/>
    </reaction>
</comment>
<comment type="catalytic activity">
    <reaction evidence="1">
        <text>L-aspartyl-tRNA(Asn) + L-glutamine + ATP + H2O = L-asparaginyl-tRNA(Asn) + L-glutamate + ADP + phosphate + 2 H(+)</text>
        <dbReference type="Rhea" id="RHEA:14513"/>
        <dbReference type="Rhea" id="RHEA-COMP:9674"/>
        <dbReference type="Rhea" id="RHEA-COMP:9677"/>
        <dbReference type="ChEBI" id="CHEBI:15377"/>
        <dbReference type="ChEBI" id="CHEBI:15378"/>
        <dbReference type="ChEBI" id="CHEBI:29985"/>
        <dbReference type="ChEBI" id="CHEBI:30616"/>
        <dbReference type="ChEBI" id="CHEBI:43474"/>
        <dbReference type="ChEBI" id="CHEBI:58359"/>
        <dbReference type="ChEBI" id="CHEBI:78515"/>
        <dbReference type="ChEBI" id="CHEBI:78516"/>
        <dbReference type="ChEBI" id="CHEBI:456216"/>
    </reaction>
</comment>
<comment type="subunit">
    <text evidence="1">Heterotrimer of A, B and C subunits.</text>
</comment>
<comment type="similarity">
    <text evidence="1">Belongs to the GatB/GatE family. GatB subfamily.</text>
</comment>